<gene>
    <name evidence="1" type="primary">nhaB</name>
    <name type="ordered locus">VV1_2232</name>
</gene>
<comment type="function">
    <text evidence="1">Na(+)/H(+) antiporter that extrudes sodium in exchange for external protons.</text>
</comment>
<comment type="catalytic activity">
    <reaction evidence="1">
        <text>2 Na(+)(in) + 3 H(+)(out) = 2 Na(+)(out) + 3 H(+)(in)</text>
        <dbReference type="Rhea" id="RHEA:29247"/>
        <dbReference type="ChEBI" id="CHEBI:15378"/>
        <dbReference type="ChEBI" id="CHEBI:29101"/>
    </reaction>
    <physiologicalReaction direction="left-to-right" evidence="1">
        <dbReference type="Rhea" id="RHEA:29248"/>
    </physiologicalReaction>
</comment>
<comment type="subcellular location">
    <subcellularLocation>
        <location evidence="1">Cell inner membrane</location>
        <topology evidence="1">Multi-pass membrane protein</topology>
    </subcellularLocation>
</comment>
<comment type="similarity">
    <text evidence="1">Belongs to the NhaB Na(+)/H(+) (TC 2.A.34) antiporter family.</text>
</comment>
<organism>
    <name type="scientific">Vibrio vulnificus (strain CMCP6)</name>
    <dbReference type="NCBI Taxonomy" id="216895"/>
    <lineage>
        <taxon>Bacteria</taxon>
        <taxon>Pseudomonadati</taxon>
        <taxon>Pseudomonadota</taxon>
        <taxon>Gammaproteobacteria</taxon>
        <taxon>Vibrionales</taxon>
        <taxon>Vibrionaceae</taxon>
        <taxon>Vibrio</taxon>
    </lineage>
</organism>
<protein>
    <recommendedName>
        <fullName evidence="1">Na(+)/H(+) antiporter NhaB</fullName>
    </recommendedName>
    <alternativeName>
        <fullName evidence="1">Sodium/proton antiporter NhaB</fullName>
    </alternativeName>
</protein>
<name>NHAB_VIBVU</name>
<reference key="1">
    <citation type="submission" date="2002-12" db="EMBL/GenBank/DDBJ databases">
        <title>Complete genome sequence of Vibrio vulnificus CMCP6.</title>
        <authorList>
            <person name="Rhee J.H."/>
            <person name="Kim S.Y."/>
            <person name="Chung S.S."/>
            <person name="Kim J.J."/>
            <person name="Moon Y.H."/>
            <person name="Jeong H."/>
            <person name="Choy H.E."/>
        </authorList>
    </citation>
    <scope>NUCLEOTIDE SEQUENCE [LARGE SCALE GENOMIC DNA]</scope>
    <source>
        <strain>CMCP6</strain>
    </source>
</reference>
<evidence type="ECO:0000255" key="1">
    <source>
        <dbReference type="HAMAP-Rule" id="MF_01599"/>
    </source>
</evidence>
<feature type="chain" id="PRO_0000333150" description="Na(+)/H(+) antiporter NhaB">
    <location>
        <begin position="1"/>
        <end position="529"/>
    </location>
</feature>
<feature type="transmembrane region" description="Helical" evidence="1">
    <location>
        <begin position="13"/>
        <end position="33"/>
    </location>
</feature>
<feature type="transmembrane region" description="Helical" evidence="1">
    <location>
        <begin position="34"/>
        <end position="54"/>
    </location>
</feature>
<feature type="transmembrane region" description="Helical" evidence="1">
    <location>
        <begin position="90"/>
        <end position="110"/>
    </location>
</feature>
<feature type="transmembrane region" description="Helical" evidence="1">
    <location>
        <begin position="113"/>
        <end position="133"/>
    </location>
</feature>
<feature type="transmembrane region" description="Helical" evidence="1">
    <location>
        <begin position="136"/>
        <end position="156"/>
    </location>
</feature>
<feature type="transmembrane region" description="Helical" evidence="1">
    <location>
        <begin position="205"/>
        <end position="225"/>
    </location>
</feature>
<feature type="transmembrane region" description="Helical" evidence="1">
    <location>
        <begin position="241"/>
        <end position="261"/>
    </location>
</feature>
<feature type="transmembrane region" description="Helical" evidence="1">
    <location>
        <begin position="306"/>
        <end position="326"/>
    </location>
</feature>
<feature type="transmembrane region" description="Helical" evidence="1">
    <location>
        <begin position="327"/>
        <end position="347"/>
    </location>
</feature>
<feature type="transmembrane region" description="Helical" evidence="1">
    <location>
        <begin position="351"/>
        <end position="371"/>
    </location>
</feature>
<feature type="transmembrane region" description="Helical" evidence="1">
    <location>
        <begin position="451"/>
        <end position="471"/>
    </location>
</feature>
<feature type="transmembrane region" description="Helical" evidence="1">
    <location>
        <begin position="479"/>
        <end position="499"/>
    </location>
</feature>
<proteinExistence type="inferred from homology"/>
<keyword id="KW-0050">Antiport</keyword>
<keyword id="KW-0997">Cell inner membrane</keyword>
<keyword id="KW-1003">Cell membrane</keyword>
<keyword id="KW-0406">Ion transport</keyword>
<keyword id="KW-0472">Membrane</keyword>
<keyword id="KW-0915">Sodium</keyword>
<keyword id="KW-0739">Sodium transport</keyword>
<keyword id="KW-0812">Transmembrane</keyword>
<keyword id="KW-1133">Transmembrane helix</keyword>
<keyword id="KW-0813">Transport</keyword>
<sequence length="529" mass="57456">MPMSLGNAFIKNFLGKAPDWYKVAIISFLIINPIVFFFVDPFVAGWLLVVEFIFTLAMALKCYPLQPGGLLAIEAIAIGMTSPEQVKHELVANIEVLLLLVFMVAGIYFMKQLLLFIFTKILLGIRSKAILSLAFCFAAAFLSAFLDALTVIAVVISVAVGFYSIYHKVASGKGVSSDHDHTQDDHLAELTREDLENYRAFLRSLLMHAGVGTALGGVTTMVGEPQNLIIADQASWLFGEFLIRMAPVTLPVFVCGLLTCFAVEKLKVFGYGAELPDNVRHILVEFDKEERKARTNQDVAKLWIQGLIAVWLIVGLALHLAAVGLIGLSVIILATAFTGVIEEHSLGKAFEEALPFTALLAVFFSIVAVIIDQELFKPVIDAVLAVEDKGTQLAMFYVANGLLSMVSDNVFVGTVYINEVKTALVEGIITRDQFDLLAVAINTGTNLPSVATPNGQAAFLFLLTSALAPLIRLSYGKMVIMALPYTIVLALVGLFGIVFLLEPMTAWFYDAGWIAHHVGEATHAVSGGH</sequence>
<dbReference type="EMBL" id="AE016795">
    <property type="protein sequence ID" value="AAO10612.1"/>
    <property type="molecule type" value="Genomic_DNA"/>
</dbReference>
<dbReference type="RefSeq" id="WP_011080104.1">
    <property type="nucleotide sequence ID" value="NC_004459.3"/>
</dbReference>
<dbReference type="SMR" id="Q8DAG9"/>
<dbReference type="KEGG" id="vvu:VV1_2232"/>
<dbReference type="HOGENOM" id="CLU_041110_0_0_6"/>
<dbReference type="Proteomes" id="UP000002275">
    <property type="component" value="Chromosome 1"/>
</dbReference>
<dbReference type="GO" id="GO:0005886">
    <property type="term" value="C:plasma membrane"/>
    <property type="evidence" value="ECO:0007669"/>
    <property type="project" value="UniProtKB-SubCell"/>
</dbReference>
<dbReference type="GO" id="GO:0015385">
    <property type="term" value="F:sodium:proton antiporter activity"/>
    <property type="evidence" value="ECO:0007669"/>
    <property type="project" value="InterPro"/>
</dbReference>
<dbReference type="HAMAP" id="MF_01599">
    <property type="entry name" value="NhaB"/>
    <property type="match status" value="1"/>
</dbReference>
<dbReference type="InterPro" id="IPR004671">
    <property type="entry name" value="Na+/H+_antiporter_NhaB"/>
</dbReference>
<dbReference type="NCBIfam" id="TIGR00774">
    <property type="entry name" value="NhaB"/>
    <property type="match status" value="1"/>
</dbReference>
<dbReference type="NCBIfam" id="NF007093">
    <property type="entry name" value="PRK09547.1"/>
    <property type="match status" value="1"/>
</dbReference>
<dbReference type="PANTHER" id="PTHR43302:SF1">
    <property type="entry name" value="NA(+)_H(+) ANTIPORTER NHAB"/>
    <property type="match status" value="1"/>
</dbReference>
<dbReference type="PANTHER" id="PTHR43302">
    <property type="entry name" value="TRANSPORTER ARSB-RELATED"/>
    <property type="match status" value="1"/>
</dbReference>
<dbReference type="Pfam" id="PF06450">
    <property type="entry name" value="NhaB"/>
    <property type="match status" value="1"/>
</dbReference>
<accession>Q8DAG9</accession>